<sequence>MALLQIAEPGQSAAPHQQKLAVGIDLGTTNSLVAAVRSGEASTLVDQQGRSILPSVVHYTSVSYTTGDEARANAQTDPKNTIISVKRLIGRSLSDIQQRYPSLPYQFEESDNGLPVIRTEQGNKNPIQVSSDILRALGQRAESTLGGELSGAVITVPAYFDDAQRAGTKDAAQLAGLHVLRLLNEPTAAAIAYGLDSGKEGVIAVYDLGGGTFDISILRLSKGVFEVLATGGDSALGGDDFDHLIAEHFQEQMGLSELTAEQNRILLDAATEAKIGLSEAESVNVEVLGWAGSLTREEFEDIIKPLVKKTLLSCRRALKDAEVDADDVLEVVMVGGSTRTLLVREMVGDFFGRTPLTSINPDEVVAIGASIQADILVGNKPDSEMLLLDVIPLSLGIETMGGLVEKIIPRNTTIPVARAQEFTTFKDGQTAMTVHTVQGEREMVDDCRSLARFALKGIPPMAAGAAHIRVTYQVDADGLLSVTAMEKSTGVQAEIQVKPSYGLSDNEVASMLKDSMTFAKEDMQARALAEQRVEADRVIEGLIAAMQADGDELLDEQEKQHLLQAIEALIEVRNGESADAIELEIKNTDKASQDFASRRMDKSIRAALSGQSVDNI</sequence>
<comment type="function">
    <text evidence="1">Chaperone involved in the maturation of iron-sulfur cluster-containing proteins. Has a low intrinsic ATPase activity which is markedly stimulated by HscB.</text>
</comment>
<comment type="similarity">
    <text evidence="1">Belongs to the heat shock protein 70 family.</text>
</comment>
<proteinExistence type="inferred from homology"/>
<organism>
    <name type="scientific">Vibrio atlanticus (strain LGP32)</name>
    <name type="common">Vibrio splendidus (strain Mel32)</name>
    <dbReference type="NCBI Taxonomy" id="575788"/>
    <lineage>
        <taxon>Bacteria</taxon>
        <taxon>Pseudomonadati</taxon>
        <taxon>Pseudomonadota</taxon>
        <taxon>Gammaproteobacteria</taxon>
        <taxon>Vibrionales</taxon>
        <taxon>Vibrionaceae</taxon>
        <taxon>Vibrio</taxon>
    </lineage>
</organism>
<dbReference type="EMBL" id="FM954972">
    <property type="protein sequence ID" value="CAV17604.1"/>
    <property type="molecule type" value="Genomic_DNA"/>
</dbReference>
<dbReference type="SMR" id="B7VJT0"/>
<dbReference type="STRING" id="575788.VS_0611"/>
<dbReference type="KEGG" id="vsp:VS_0611"/>
<dbReference type="PATRIC" id="fig|575788.5.peg.1964"/>
<dbReference type="eggNOG" id="COG0443">
    <property type="taxonomic scope" value="Bacteria"/>
</dbReference>
<dbReference type="HOGENOM" id="CLU_005965_2_1_6"/>
<dbReference type="Proteomes" id="UP000009100">
    <property type="component" value="Chromosome 1"/>
</dbReference>
<dbReference type="GO" id="GO:0005524">
    <property type="term" value="F:ATP binding"/>
    <property type="evidence" value="ECO:0007669"/>
    <property type="project" value="UniProtKB-KW"/>
</dbReference>
<dbReference type="GO" id="GO:0016887">
    <property type="term" value="F:ATP hydrolysis activity"/>
    <property type="evidence" value="ECO:0007669"/>
    <property type="project" value="UniProtKB-UniRule"/>
</dbReference>
<dbReference type="GO" id="GO:0140662">
    <property type="term" value="F:ATP-dependent protein folding chaperone"/>
    <property type="evidence" value="ECO:0007669"/>
    <property type="project" value="InterPro"/>
</dbReference>
<dbReference type="GO" id="GO:0051082">
    <property type="term" value="F:unfolded protein binding"/>
    <property type="evidence" value="ECO:0007669"/>
    <property type="project" value="InterPro"/>
</dbReference>
<dbReference type="GO" id="GO:0016226">
    <property type="term" value="P:iron-sulfur cluster assembly"/>
    <property type="evidence" value="ECO:0007669"/>
    <property type="project" value="InterPro"/>
</dbReference>
<dbReference type="CDD" id="cd10236">
    <property type="entry name" value="ASKHA_NBD_HSP70_HscA"/>
    <property type="match status" value="1"/>
</dbReference>
<dbReference type="FunFam" id="3.30.420.40:FF:000046">
    <property type="entry name" value="Chaperone protein HscA"/>
    <property type="match status" value="1"/>
</dbReference>
<dbReference type="FunFam" id="2.60.34.10:FF:000005">
    <property type="entry name" value="Chaperone protein HscA homolog"/>
    <property type="match status" value="1"/>
</dbReference>
<dbReference type="Gene3D" id="1.20.1270.10">
    <property type="match status" value="1"/>
</dbReference>
<dbReference type="Gene3D" id="3.30.420.40">
    <property type="match status" value="2"/>
</dbReference>
<dbReference type="Gene3D" id="3.90.640.10">
    <property type="entry name" value="Actin, Chain A, domain 4"/>
    <property type="match status" value="1"/>
</dbReference>
<dbReference type="Gene3D" id="2.60.34.10">
    <property type="entry name" value="Substrate Binding Domain Of DNAk, Chain A, domain 1"/>
    <property type="match status" value="1"/>
</dbReference>
<dbReference type="HAMAP" id="MF_00679">
    <property type="entry name" value="HscA"/>
    <property type="match status" value="1"/>
</dbReference>
<dbReference type="InterPro" id="IPR043129">
    <property type="entry name" value="ATPase_NBD"/>
</dbReference>
<dbReference type="InterPro" id="IPR018181">
    <property type="entry name" value="Heat_shock_70_CS"/>
</dbReference>
<dbReference type="InterPro" id="IPR042039">
    <property type="entry name" value="HscA_NBD"/>
</dbReference>
<dbReference type="InterPro" id="IPR029048">
    <property type="entry name" value="HSP70_C_sf"/>
</dbReference>
<dbReference type="InterPro" id="IPR029047">
    <property type="entry name" value="HSP70_peptide-bd_sf"/>
</dbReference>
<dbReference type="InterPro" id="IPR013126">
    <property type="entry name" value="Hsp_70_fam"/>
</dbReference>
<dbReference type="InterPro" id="IPR010236">
    <property type="entry name" value="ISC_FeS_clus_asmbl_HscA"/>
</dbReference>
<dbReference type="NCBIfam" id="TIGR01991">
    <property type="entry name" value="HscA"/>
    <property type="match status" value="1"/>
</dbReference>
<dbReference type="NCBIfam" id="NF003520">
    <property type="entry name" value="PRK05183.1"/>
    <property type="match status" value="1"/>
</dbReference>
<dbReference type="PANTHER" id="PTHR19375">
    <property type="entry name" value="HEAT SHOCK PROTEIN 70KDA"/>
    <property type="match status" value="1"/>
</dbReference>
<dbReference type="Pfam" id="PF00012">
    <property type="entry name" value="HSP70"/>
    <property type="match status" value="1"/>
</dbReference>
<dbReference type="PRINTS" id="PR00301">
    <property type="entry name" value="HEATSHOCK70"/>
</dbReference>
<dbReference type="SUPFAM" id="SSF53067">
    <property type="entry name" value="Actin-like ATPase domain"/>
    <property type="match status" value="2"/>
</dbReference>
<dbReference type="SUPFAM" id="SSF100934">
    <property type="entry name" value="Heat shock protein 70kD (HSP70), C-terminal subdomain"/>
    <property type="match status" value="1"/>
</dbReference>
<dbReference type="SUPFAM" id="SSF100920">
    <property type="entry name" value="Heat shock protein 70kD (HSP70), peptide-binding domain"/>
    <property type="match status" value="1"/>
</dbReference>
<dbReference type="PROSITE" id="PS00297">
    <property type="entry name" value="HSP70_1"/>
    <property type="match status" value="1"/>
</dbReference>
<dbReference type="PROSITE" id="PS00329">
    <property type="entry name" value="HSP70_2"/>
    <property type="match status" value="1"/>
</dbReference>
<name>HSCA_VIBA3</name>
<feature type="chain" id="PRO_1000190674" description="Chaperone protein HscA homolog">
    <location>
        <begin position="1"/>
        <end position="616"/>
    </location>
</feature>
<reference key="1">
    <citation type="submission" date="2009-02" db="EMBL/GenBank/DDBJ databases">
        <title>Vibrio splendidus str. LGP32 complete genome.</title>
        <authorList>
            <person name="Mazel D."/>
            <person name="Le Roux F."/>
        </authorList>
    </citation>
    <scope>NUCLEOTIDE SEQUENCE [LARGE SCALE GENOMIC DNA]</scope>
    <source>
        <strain>LGP32</strain>
    </source>
</reference>
<accession>B7VJT0</accession>
<gene>
    <name evidence="1" type="primary">hscA</name>
    <name type="ordered locus">VS_0611</name>
</gene>
<keyword id="KW-0067">ATP-binding</keyword>
<keyword id="KW-0143">Chaperone</keyword>
<keyword id="KW-0547">Nucleotide-binding</keyword>
<protein>
    <recommendedName>
        <fullName evidence="1">Chaperone protein HscA homolog</fullName>
    </recommendedName>
</protein>
<evidence type="ECO:0000255" key="1">
    <source>
        <dbReference type="HAMAP-Rule" id="MF_00679"/>
    </source>
</evidence>